<comment type="function">
    <text evidence="6">This protein functions as a dosage-dependent inducer in mitotic control. It is a tyrosine protein phosphatase required for progression of the cell cycle. It may directly dephosphorylate p34(cdc2) and activate the p34(cdc2) kinase activity.</text>
</comment>
<comment type="catalytic activity">
    <reaction evidence="4">
        <text>O-phospho-L-tyrosyl-[protein] + H2O = L-tyrosyl-[protein] + phosphate</text>
        <dbReference type="Rhea" id="RHEA:10684"/>
        <dbReference type="Rhea" id="RHEA-COMP:10136"/>
        <dbReference type="Rhea" id="RHEA-COMP:20101"/>
        <dbReference type="ChEBI" id="CHEBI:15377"/>
        <dbReference type="ChEBI" id="CHEBI:43474"/>
        <dbReference type="ChEBI" id="CHEBI:46858"/>
        <dbReference type="ChEBI" id="CHEBI:61978"/>
        <dbReference type="EC" id="3.1.3.48"/>
    </reaction>
</comment>
<comment type="similarity">
    <text evidence="5">Belongs to the MPI phosphatase family.</text>
</comment>
<name>MPIP_EMENI</name>
<sequence>MEHSSPLAAMQPPSVMLGHCFRSDAPTSYHGFSPLPGLGPGGFNFKDLSMKRSNGDYFGTKVVRGSSPTASLAADLSQNFHIDQSPQVATPRRSLFSACLLGNGNRRGVDDAMTTPPLPSSSPAPAMDIMDMSPLPHKPPFISTPEIELDSPTLESSPMDTTMMSTDGLVPDSPTVLPKDGKQERRRPTFLRPSLARSKAQSFQVGMTRPAPESQGPPFKFQTNGINKTSSGVAASLEDMFGESPQRERPMMRINSTSGLNSRLRPPLGSGSHVRGNGSPSAASVRKSAHPNMRPRKQCRRSLSMYEHPEDVIADSEVSYTSNAPLQSISDFEETQALQLPHFIPEEQADNLPRIDKATLVDIKEGKYDNMFDNIMIIDCRFEYEYDGGHIVGAVNYNDKENLAAELFADPKPRTAIVFHCEYSVHRAPLMAKYIRHRDRAYNVDHYPQLSYPDMYILEGGYSGFFAEHRSLCYPQNYVEMSAKEHEFACERGLGKVKQRSKLSRAQTFAFGQQSPEMEDSPTGRCRNNPGDRKLLASPFNDSPGSRFPGRRMLSY</sequence>
<keyword id="KW-0131">Cell cycle</keyword>
<keyword id="KW-0132">Cell division</keyword>
<keyword id="KW-0378">Hydrolase</keyword>
<keyword id="KW-0498">Mitosis</keyword>
<keyword id="KW-0904">Protein phosphatase</keyword>
<keyword id="KW-1185">Reference proteome</keyword>
<feature type="chain" id="PRO_0000198660" description="M-phase inducer phosphatase">
    <location>
        <begin position="1"/>
        <end position="556"/>
    </location>
</feature>
<feature type="domain" description="Rhodanese" evidence="2">
    <location>
        <begin position="371"/>
        <end position="474"/>
    </location>
</feature>
<feature type="region of interest" description="Disordered" evidence="3">
    <location>
        <begin position="165"/>
        <end position="186"/>
    </location>
</feature>
<feature type="region of interest" description="Disordered" evidence="3">
    <location>
        <begin position="257"/>
        <end position="297"/>
    </location>
</feature>
<feature type="region of interest" description="Disordered" evidence="3">
    <location>
        <begin position="505"/>
        <end position="556"/>
    </location>
</feature>
<feature type="compositionally biased region" description="Basic residues" evidence="3">
    <location>
        <begin position="287"/>
        <end position="297"/>
    </location>
</feature>
<feature type="compositionally biased region" description="Polar residues" evidence="3">
    <location>
        <begin position="505"/>
        <end position="516"/>
    </location>
</feature>
<feature type="active site" evidence="1">
    <location>
        <position position="421"/>
    </location>
</feature>
<feature type="sequence conflict" description="In Ref. 1; CAA45885." evidence="5" ref="1">
    <original>P</original>
    <variation>G</variation>
    <location>
        <position position="353"/>
    </location>
</feature>
<gene>
    <name type="primary">nimT</name>
    <name type="ORF">AN3941</name>
</gene>
<organism>
    <name type="scientific">Emericella nidulans (strain FGSC A4 / ATCC 38163 / CBS 112.46 / NRRL 194 / M139)</name>
    <name type="common">Aspergillus nidulans</name>
    <dbReference type="NCBI Taxonomy" id="227321"/>
    <lineage>
        <taxon>Eukaryota</taxon>
        <taxon>Fungi</taxon>
        <taxon>Dikarya</taxon>
        <taxon>Ascomycota</taxon>
        <taxon>Pezizomycotina</taxon>
        <taxon>Eurotiomycetes</taxon>
        <taxon>Eurotiomycetidae</taxon>
        <taxon>Eurotiales</taxon>
        <taxon>Aspergillaceae</taxon>
        <taxon>Aspergillus</taxon>
        <taxon>Aspergillus subgen. Nidulantes</taxon>
    </lineage>
</organism>
<dbReference type="EC" id="3.1.3.48" evidence="4"/>
<dbReference type="EMBL" id="X64601">
    <property type="protein sequence ID" value="CAA45885.1"/>
    <property type="molecule type" value="mRNA"/>
</dbReference>
<dbReference type="EMBL" id="AACD01000064">
    <property type="protein sequence ID" value="EAA59250.1"/>
    <property type="molecule type" value="Genomic_DNA"/>
</dbReference>
<dbReference type="EMBL" id="BN001302">
    <property type="protein sequence ID" value="CBF75046.1"/>
    <property type="molecule type" value="Genomic_DNA"/>
</dbReference>
<dbReference type="PIR" id="S24395">
    <property type="entry name" value="S24395"/>
</dbReference>
<dbReference type="RefSeq" id="XP_661545.1">
    <property type="nucleotide sequence ID" value="XM_656453.2"/>
</dbReference>
<dbReference type="SMR" id="P30303"/>
<dbReference type="STRING" id="227321.P30303"/>
<dbReference type="EnsemblFungi" id="CBF75046">
    <property type="protein sequence ID" value="CBF75046"/>
    <property type="gene ID" value="ANIA_03941"/>
</dbReference>
<dbReference type="GeneID" id="2873361"/>
<dbReference type="KEGG" id="ani:ANIA_03941"/>
<dbReference type="VEuPathDB" id="FungiDB:AN3941"/>
<dbReference type="eggNOG" id="KOG3772">
    <property type="taxonomic scope" value="Eukaryota"/>
</dbReference>
<dbReference type="HOGENOM" id="CLU_017900_0_0_1"/>
<dbReference type="InParanoid" id="P30303"/>
<dbReference type="OMA" id="HSPQMED"/>
<dbReference type="OrthoDB" id="26523at2759"/>
<dbReference type="Proteomes" id="UP000000560">
    <property type="component" value="Chromosome II"/>
</dbReference>
<dbReference type="GO" id="GO:0005737">
    <property type="term" value="C:cytoplasm"/>
    <property type="evidence" value="ECO:0000318"/>
    <property type="project" value="GO_Central"/>
</dbReference>
<dbReference type="GO" id="GO:0005634">
    <property type="term" value="C:nucleus"/>
    <property type="evidence" value="ECO:0000318"/>
    <property type="project" value="GO_Central"/>
</dbReference>
<dbReference type="GO" id="GO:0004725">
    <property type="term" value="F:protein tyrosine phosphatase activity"/>
    <property type="evidence" value="ECO:0000315"/>
    <property type="project" value="AspGD"/>
</dbReference>
<dbReference type="GO" id="GO:0051301">
    <property type="term" value="P:cell division"/>
    <property type="evidence" value="ECO:0007669"/>
    <property type="project" value="UniProtKB-KW"/>
</dbReference>
<dbReference type="GO" id="GO:0000086">
    <property type="term" value="P:G2/M transition of mitotic cell cycle"/>
    <property type="evidence" value="ECO:0000315"/>
    <property type="project" value="AspGD"/>
</dbReference>
<dbReference type="GO" id="GO:0010971">
    <property type="term" value="P:positive regulation of G2/M transition of mitotic cell cycle"/>
    <property type="evidence" value="ECO:0000318"/>
    <property type="project" value="GO_Central"/>
</dbReference>
<dbReference type="GO" id="GO:0110032">
    <property type="term" value="P:positive regulation of G2/MI transition of meiotic cell cycle"/>
    <property type="evidence" value="ECO:0000318"/>
    <property type="project" value="GO_Central"/>
</dbReference>
<dbReference type="GO" id="GO:0045840">
    <property type="term" value="P:positive regulation of mitotic nuclear division"/>
    <property type="evidence" value="ECO:0000315"/>
    <property type="project" value="AspGD"/>
</dbReference>
<dbReference type="CDD" id="cd01530">
    <property type="entry name" value="Cdc25"/>
    <property type="match status" value="1"/>
</dbReference>
<dbReference type="FunFam" id="3.40.250.10:FF:000021">
    <property type="entry name" value="M-phase inducer phosphatase cdc-25.2"/>
    <property type="match status" value="1"/>
</dbReference>
<dbReference type="Gene3D" id="3.40.250.10">
    <property type="entry name" value="Rhodanese-like domain"/>
    <property type="match status" value="1"/>
</dbReference>
<dbReference type="InterPro" id="IPR000751">
    <property type="entry name" value="MPI_Phosphatase"/>
</dbReference>
<dbReference type="InterPro" id="IPR001763">
    <property type="entry name" value="Rhodanese-like_dom"/>
</dbReference>
<dbReference type="InterPro" id="IPR036873">
    <property type="entry name" value="Rhodanese-like_dom_sf"/>
</dbReference>
<dbReference type="PANTHER" id="PTHR10828">
    <property type="entry name" value="M-PHASE INDUCER PHOSPHATASE DUAL SPECIFICITY PHOSPHATASE CDC25"/>
    <property type="match status" value="1"/>
</dbReference>
<dbReference type="PANTHER" id="PTHR10828:SF17">
    <property type="entry name" value="PROTEIN-TYROSINE-PHOSPHATASE"/>
    <property type="match status" value="1"/>
</dbReference>
<dbReference type="Pfam" id="PF00581">
    <property type="entry name" value="Rhodanese"/>
    <property type="match status" value="1"/>
</dbReference>
<dbReference type="PRINTS" id="PR00716">
    <property type="entry name" value="MPIPHPHTASE"/>
</dbReference>
<dbReference type="SMART" id="SM00450">
    <property type="entry name" value="RHOD"/>
    <property type="match status" value="1"/>
</dbReference>
<dbReference type="SUPFAM" id="SSF52821">
    <property type="entry name" value="Rhodanese/Cell cycle control phosphatase"/>
    <property type="match status" value="1"/>
</dbReference>
<dbReference type="PROSITE" id="PS50206">
    <property type="entry name" value="RHODANESE_3"/>
    <property type="match status" value="1"/>
</dbReference>
<evidence type="ECO:0000250" key="1"/>
<evidence type="ECO:0000255" key="2">
    <source>
        <dbReference type="PROSITE-ProRule" id="PRU00173"/>
    </source>
</evidence>
<evidence type="ECO:0000256" key="3">
    <source>
        <dbReference type="SAM" id="MobiDB-lite"/>
    </source>
</evidence>
<evidence type="ECO:0000269" key="4">
    <source>
    </source>
</evidence>
<evidence type="ECO:0000305" key="5"/>
<evidence type="ECO:0000305" key="6">
    <source>
    </source>
</evidence>
<proteinExistence type="evidence at protein level"/>
<accession>P30303</accession>
<accession>C8V635</accession>
<accession>Q5B689</accession>
<protein>
    <recommendedName>
        <fullName>M-phase inducer phosphatase</fullName>
        <ecNumber evidence="4">3.1.3.48</ecNumber>
    </recommendedName>
</protein>
<reference key="1">
    <citation type="journal article" date="1992" name="EMBO J.">
        <title>An extra copy of nimEcyclinB elevates pre-MPF levels and partially suppresses mutation of nimTcdc25 in Aspergillus nidulans.</title>
        <authorList>
            <person name="O'Connell M.J."/>
            <person name="Osmani A.H."/>
            <person name="Morris N.R."/>
            <person name="Osmani S.A."/>
        </authorList>
    </citation>
    <scope>NUCLEOTIDE SEQUENCE [MRNA]</scope>
    <scope>FUNCTION</scope>
    <scope>CATALYTIC ACTIVITY</scope>
    <source>
        <strain>GB20</strain>
    </source>
</reference>
<reference key="2">
    <citation type="journal article" date="2005" name="Nature">
        <title>Sequencing of Aspergillus nidulans and comparative analysis with A. fumigatus and A. oryzae.</title>
        <authorList>
            <person name="Galagan J.E."/>
            <person name="Calvo S.E."/>
            <person name="Cuomo C."/>
            <person name="Ma L.-J."/>
            <person name="Wortman J.R."/>
            <person name="Batzoglou S."/>
            <person name="Lee S.-I."/>
            <person name="Bastuerkmen M."/>
            <person name="Spevak C.C."/>
            <person name="Clutterbuck J."/>
            <person name="Kapitonov V."/>
            <person name="Jurka J."/>
            <person name="Scazzocchio C."/>
            <person name="Farman M.L."/>
            <person name="Butler J."/>
            <person name="Purcell S."/>
            <person name="Harris S."/>
            <person name="Braus G.H."/>
            <person name="Draht O."/>
            <person name="Busch S."/>
            <person name="D'Enfert C."/>
            <person name="Bouchier C."/>
            <person name="Goldman G.H."/>
            <person name="Bell-Pedersen D."/>
            <person name="Griffiths-Jones S."/>
            <person name="Doonan J.H."/>
            <person name="Yu J."/>
            <person name="Vienken K."/>
            <person name="Pain A."/>
            <person name="Freitag M."/>
            <person name="Selker E.U."/>
            <person name="Archer D.B."/>
            <person name="Penalva M.A."/>
            <person name="Oakley B.R."/>
            <person name="Momany M."/>
            <person name="Tanaka T."/>
            <person name="Kumagai T."/>
            <person name="Asai K."/>
            <person name="Machida M."/>
            <person name="Nierman W.C."/>
            <person name="Denning D.W."/>
            <person name="Caddick M.X."/>
            <person name="Hynes M."/>
            <person name="Paoletti M."/>
            <person name="Fischer R."/>
            <person name="Miller B.L."/>
            <person name="Dyer P.S."/>
            <person name="Sachs M.S."/>
            <person name="Osmani S.A."/>
            <person name="Birren B.W."/>
        </authorList>
    </citation>
    <scope>NUCLEOTIDE SEQUENCE [LARGE SCALE GENOMIC DNA]</scope>
    <source>
        <strain>FGSC A4 / ATCC 38163 / CBS 112.46 / NRRL 194 / M139</strain>
    </source>
</reference>
<reference key="3">
    <citation type="journal article" date="2009" name="Fungal Genet. Biol.">
        <title>The 2008 update of the Aspergillus nidulans genome annotation: a community effort.</title>
        <authorList>
            <person name="Wortman J.R."/>
            <person name="Gilsenan J.M."/>
            <person name="Joardar V."/>
            <person name="Deegan J."/>
            <person name="Clutterbuck J."/>
            <person name="Andersen M.R."/>
            <person name="Archer D."/>
            <person name="Bencina M."/>
            <person name="Braus G."/>
            <person name="Coutinho P."/>
            <person name="von Dohren H."/>
            <person name="Doonan J."/>
            <person name="Driessen A.J."/>
            <person name="Durek P."/>
            <person name="Espeso E."/>
            <person name="Fekete E."/>
            <person name="Flipphi M."/>
            <person name="Estrada C.G."/>
            <person name="Geysens S."/>
            <person name="Goldman G."/>
            <person name="de Groot P.W."/>
            <person name="Hansen K."/>
            <person name="Harris S.D."/>
            <person name="Heinekamp T."/>
            <person name="Helmstaedt K."/>
            <person name="Henrissat B."/>
            <person name="Hofmann G."/>
            <person name="Homan T."/>
            <person name="Horio T."/>
            <person name="Horiuchi H."/>
            <person name="James S."/>
            <person name="Jones M."/>
            <person name="Karaffa L."/>
            <person name="Karanyi Z."/>
            <person name="Kato M."/>
            <person name="Keller N."/>
            <person name="Kelly D.E."/>
            <person name="Kiel J.A."/>
            <person name="Kim J.M."/>
            <person name="van der Klei I.J."/>
            <person name="Klis F.M."/>
            <person name="Kovalchuk A."/>
            <person name="Krasevec N."/>
            <person name="Kubicek C.P."/>
            <person name="Liu B."/>
            <person name="Maccabe A."/>
            <person name="Meyer V."/>
            <person name="Mirabito P."/>
            <person name="Miskei M."/>
            <person name="Mos M."/>
            <person name="Mullins J."/>
            <person name="Nelson D.R."/>
            <person name="Nielsen J."/>
            <person name="Oakley B.R."/>
            <person name="Osmani S.A."/>
            <person name="Pakula T."/>
            <person name="Paszewski A."/>
            <person name="Paulsen I."/>
            <person name="Pilsyk S."/>
            <person name="Pocsi I."/>
            <person name="Punt P.J."/>
            <person name="Ram A.F."/>
            <person name="Ren Q."/>
            <person name="Robellet X."/>
            <person name="Robson G."/>
            <person name="Seiboth B."/>
            <person name="van Solingen P."/>
            <person name="Specht T."/>
            <person name="Sun J."/>
            <person name="Taheri-Talesh N."/>
            <person name="Takeshita N."/>
            <person name="Ussery D."/>
            <person name="vanKuyk P.A."/>
            <person name="Visser H."/>
            <person name="van de Vondervoort P.J."/>
            <person name="de Vries R.P."/>
            <person name="Walton J."/>
            <person name="Xiang X."/>
            <person name="Xiong Y."/>
            <person name="Zeng A.P."/>
            <person name="Brandt B.W."/>
            <person name="Cornell M.J."/>
            <person name="van den Hondel C.A."/>
            <person name="Visser J."/>
            <person name="Oliver S.G."/>
            <person name="Turner G."/>
        </authorList>
    </citation>
    <scope>GENOME REANNOTATION</scope>
    <source>
        <strain>FGSC A4 / ATCC 38163 / CBS 112.46 / NRRL 194 / M139</strain>
    </source>
</reference>